<gene>
    <name evidence="1" type="primary">rpsK</name>
    <name type="ordered locus">Psyr_4526</name>
</gene>
<sequence>MAKPAARPRKKVKKTVVDGIAHIHASFNNTIVTITDRQGNALSWATSGGSGFRGSRKSTPFAAQVAAERAGQAALEYGLKNLDVNVKGPGPGRESAVRALNGCGYKIASITDVTPIPHNGCRPPKKRRV</sequence>
<accession>Q4ZMR6</accession>
<keyword id="KW-0687">Ribonucleoprotein</keyword>
<keyword id="KW-0689">Ribosomal protein</keyword>
<keyword id="KW-0694">RNA-binding</keyword>
<keyword id="KW-0699">rRNA-binding</keyword>
<organism>
    <name type="scientific">Pseudomonas syringae pv. syringae (strain B728a)</name>
    <dbReference type="NCBI Taxonomy" id="205918"/>
    <lineage>
        <taxon>Bacteria</taxon>
        <taxon>Pseudomonadati</taxon>
        <taxon>Pseudomonadota</taxon>
        <taxon>Gammaproteobacteria</taxon>
        <taxon>Pseudomonadales</taxon>
        <taxon>Pseudomonadaceae</taxon>
        <taxon>Pseudomonas</taxon>
        <taxon>Pseudomonas syringae</taxon>
    </lineage>
</organism>
<comment type="function">
    <text evidence="1">Located on the platform of the 30S subunit, it bridges several disparate RNA helices of the 16S rRNA. Forms part of the Shine-Dalgarno cleft in the 70S ribosome.</text>
</comment>
<comment type="subunit">
    <text evidence="1">Part of the 30S ribosomal subunit. Interacts with proteins S7 and S18. Binds to IF-3.</text>
</comment>
<comment type="similarity">
    <text evidence="1">Belongs to the universal ribosomal protein uS11 family.</text>
</comment>
<feature type="chain" id="PRO_0000230422" description="Small ribosomal subunit protein uS11">
    <location>
        <begin position="1"/>
        <end position="129"/>
    </location>
</feature>
<dbReference type="EMBL" id="CP000075">
    <property type="protein sequence ID" value="AAY39556.1"/>
    <property type="molecule type" value="Genomic_DNA"/>
</dbReference>
<dbReference type="RefSeq" id="WP_002555466.1">
    <property type="nucleotide sequence ID" value="NC_007005.1"/>
</dbReference>
<dbReference type="RefSeq" id="YP_237594.1">
    <property type="nucleotide sequence ID" value="NC_007005.1"/>
</dbReference>
<dbReference type="SMR" id="Q4ZMR6"/>
<dbReference type="STRING" id="205918.Psyr_4526"/>
<dbReference type="GeneID" id="98285415"/>
<dbReference type="KEGG" id="psb:Psyr_4526"/>
<dbReference type="PATRIC" id="fig|205918.7.peg.4664"/>
<dbReference type="eggNOG" id="COG0100">
    <property type="taxonomic scope" value="Bacteria"/>
</dbReference>
<dbReference type="HOGENOM" id="CLU_072439_5_0_6"/>
<dbReference type="OrthoDB" id="9806415at2"/>
<dbReference type="PRO" id="PR:Q4ZMR6"/>
<dbReference type="Proteomes" id="UP000000426">
    <property type="component" value="Chromosome"/>
</dbReference>
<dbReference type="GO" id="GO:1990904">
    <property type="term" value="C:ribonucleoprotein complex"/>
    <property type="evidence" value="ECO:0007669"/>
    <property type="project" value="UniProtKB-KW"/>
</dbReference>
<dbReference type="GO" id="GO:0005840">
    <property type="term" value="C:ribosome"/>
    <property type="evidence" value="ECO:0007669"/>
    <property type="project" value="UniProtKB-KW"/>
</dbReference>
<dbReference type="GO" id="GO:0019843">
    <property type="term" value="F:rRNA binding"/>
    <property type="evidence" value="ECO:0007669"/>
    <property type="project" value="UniProtKB-UniRule"/>
</dbReference>
<dbReference type="GO" id="GO:0003735">
    <property type="term" value="F:structural constituent of ribosome"/>
    <property type="evidence" value="ECO:0007669"/>
    <property type="project" value="InterPro"/>
</dbReference>
<dbReference type="GO" id="GO:0006412">
    <property type="term" value="P:translation"/>
    <property type="evidence" value="ECO:0007669"/>
    <property type="project" value="UniProtKB-UniRule"/>
</dbReference>
<dbReference type="FunFam" id="3.30.420.80:FF:000001">
    <property type="entry name" value="30S ribosomal protein S11"/>
    <property type="match status" value="1"/>
</dbReference>
<dbReference type="Gene3D" id="3.30.420.80">
    <property type="entry name" value="Ribosomal protein S11"/>
    <property type="match status" value="1"/>
</dbReference>
<dbReference type="HAMAP" id="MF_01310">
    <property type="entry name" value="Ribosomal_uS11"/>
    <property type="match status" value="1"/>
</dbReference>
<dbReference type="InterPro" id="IPR001971">
    <property type="entry name" value="Ribosomal_uS11"/>
</dbReference>
<dbReference type="InterPro" id="IPR019981">
    <property type="entry name" value="Ribosomal_uS11_bac-type"/>
</dbReference>
<dbReference type="InterPro" id="IPR018102">
    <property type="entry name" value="Ribosomal_uS11_CS"/>
</dbReference>
<dbReference type="InterPro" id="IPR036967">
    <property type="entry name" value="Ribosomal_uS11_sf"/>
</dbReference>
<dbReference type="NCBIfam" id="NF003698">
    <property type="entry name" value="PRK05309.1"/>
    <property type="match status" value="1"/>
</dbReference>
<dbReference type="NCBIfam" id="TIGR03632">
    <property type="entry name" value="uS11_bact"/>
    <property type="match status" value="1"/>
</dbReference>
<dbReference type="PANTHER" id="PTHR11759">
    <property type="entry name" value="40S RIBOSOMAL PROTEIN S14/30S RIBOSOMAL PROTEIN S11"/>
    <property type="match status" value="1"/>
</dbReference>
<dbReference type="Pfam" id="PF00411">
    <property type="entry name" value="Ribosomal_S11"/>
    <property type="match status" value="1"/>
</dbReference>
<dbReference type="PIRSF" id="PIRSF002131">
    <property type="entry name" value="Ribosomal_S11"/>
    <property type="match status" value="1"/>
</dbReference>
<dbReference type="SUPFAM" id="SSF53137">
    <property type="entry name" value="Translational machinery components"/>
    <property type="match status" value="1"/>
</dbReference>
<dbReference type="PROSITE" id="PS00054">
    <property type="entry name" value="RIBOSOMAL_S11"/>
    <property type="match status" value="1"/>
</dbReference>
<reference key="1">
    <citation type="journal article" date="2005" name="Proc. Natl. Acad. Sci. U.S.A.">
        <title>Comparison of the complete genome sequences of Pseudomonas syringae pv. syringae B728a and pv. tomato DC3000.</title>
        <authorList>
            <person name="Feil H."/>
            <person name="Feil W.S."/>
            <person name="Chain P."/>
            <person name="Larimer F."/>
            <person name="Dibartolo G."/>
            <person name="Copeland A."/>
            <person name="Lykidis A."/>
            <person name="Trong S."/>
            <person name="Nolan M."/>
            <person name="Goltsman E."/>
            <person name="Thiel J."/>
            <person name="Malfatti S."/>
            <person name="Loper J.E."/>
            <person name="Lapidus A."/>
            <person name="Detter J.C."/>
            <person name="Land M."/>
            <person name="Richardson P.M."/>
            <person name="Kyrpides N.C."/>
            <person name="Ivanova N."/>
            <person name="Lindow S.E."/>
        </authorList>
    </citation>
    <scope>NUCLEOTIDE SEQUENCE [LARGE SCALE GENOMIC DNA]</scope>
    <source>
        <strain>B728a</strain>
    </source>
</reference>
<proteinExistence type="inferred from homology"/>
<name>RS11_PSEU2</name>
<evidence type="ECO:0000255" key="1">
    <source>
        <dbReference type="HAMAP-Rule" id="MF_01310"/>
    </source>
</evidence>
<evidence type="ECO:0000305" key="2"/>
<protein>
    <recommendedName>
        <fullName evidence="1">Small ribosomal subunit protein uS11</fullName>
    </recommendedName>
    <alternativeName>
        <fullName evidence="2">30S ribosomal protein S11</fullName>
    </alternativeName>
</protein>